<keyword id="KW-0002">3D-structure</keyword>
<keyword id="KW-0007">Acetylation</keyword>
<keyword id="KW-0225">Disease variant</keyword>
<keyword id="KW-0342">GTP-binding</keyword>
<keyword id="KW-0378">Hydrolase</keyword>
<keyword id="KW-0991">Intellectual disability</keyword>
<keyword id="KW-0622">Neuropathy</keyword>
<keyword id="KW-0547">Nucleotide-binding</keyword>
<keyword id="KW-1267">Proteomics identification</keyword>
<keyword id="KW-1185">Reference proteome</keyword>
<organism>
    <name type="scientific">Homo sapiens</name>
    <name type="common">Human</name>
    <dbReference type="NCBI Taxonomy" id="9606"/>
    <lineage>
        <taxon>Eukaryota</taxon>
        <taxon>Metazoa</taxon>
        <taxon>Chordata</taxon>
        <taxon>Craniata</taxon>
        <taxon>Vertebrata</taxon>
        <taxon>Euteleostomi</taxon>
        <taxon>Mammalia</taxon>
        <taxon>Eutheria</taxon>
        <taxon>Euarchontoglires</taxon>
        <taxon>Primates</taxon>
        <taxon>Haplorrhini</taxon>
        <taxon>Catarrhini</taxon>
        <taxon>Hominidae</taxon>
        <taxon>Homo</taxon>
    </lineage>
</organism>
<gene>
    <name type="primary">NUDT2</name>
    <name type="synonym">APAH1</name>
</gene>
<comment type="function">
    <text evidence="1 2">Catalyzes the asymmetric hydrolysis of diadenosine 5',5'''-P1,P4-tetraphosphate (Ap4A) to yield AMP and ATP (By similarity). Exhibits decapping activity towards FAD-capped RNAs and dpCoA-capped RNAs in vitro (By similarity).</text>
</comment>
<comment type="catalytic activity">
    <reaction evidence="1">
        <text>P(1),P(4)-bis(5'-guanosyl) tetraphosphate + H2O = GMP + GTP + 2 H(+)</text>
        <dbReference type="Rhea" id="RHEA:22484"/>
        <dbReference type="ChEBI" id="CHEBI:15377"/>
        <dbReference type="ChEBI" id="CHEBI:15378"/>
        <dbReference type="ChEBI" id="CHEBI:37565"/>
        <dbReference type="ChEBI" id="CHEBI:57553"/>
        <dbReference type="ChEBI" id="CHEBI:58115"/>
        <dbReference type="EC" id="3.6.1.17"/>
    </reaction>
</comment>
<comment type="catalytic activity">
    <reaction evidence="2">
        <text>a 5'-end CoA-ribonucleoside in mRNA + H2O = a 5'-end phospho-adenosine-phospho-ribonucleoside in mRNA + (R)-4'-phosphopantetheine + 2 H(+)</text>
        <dbReference type="Rhea" id="RHEA:67592"/>
        <dbReference type="Rhea" id="RHEA-COMP:15719"/>
        <dbReference type="Rhea" id="RHEA-COMP:17276"/>
        <dbReference type="ChEBI" id="CHEBI:15377"/>
        <dbReference type="ChEBI" id="CHEBI:15378"/>
        <dbReference type="ChEBI" id="CHEBI:61723"/>
        <dbReference type="ChEBI" id="CHEBI:144051"/>
        <dbReference type="ChEBI" id="CHEBI:172371"/>
    </reaction>
    <physiologicalReaction direction="left-to-right" evidence="2">
        <dbReference type="Rhea" id="RHEA:67593"/>
    </physiologicalReaction>
</comment>
<comment type="catalytic activity">
    <reaction evidence="2">
        <text>a 5'-end FAD-phospho-ribonucleoside in mRNA + H2O = a 5'-end phospho-adenosine-phospho-ribonucleoside in mRNA + FMN + 2 H(+)</text>
        <dbReference type="Rhea" id="RHEA:67588"/>
        <dbReference type="Rhea" id="RHEA-COMP:15719"/>
        <dbReference type="Rhea" id="RHEA-COMP:17275"/>
        <dbReference type="ChEBI" id="CHEBI:15377"/>
        <dbReference type="ChEBI" id="CHEBI:15378"/>
        <dbReference type="ChEBI" id="CHEBI:58210"/>
        <dbReference type="ChEBI" id="CHEBI:144051"/>
        <dbReference type="ChEBI" id="CHEBI:172372"/>
    </reaction>
    <physiologicalReaction direction="left-to-right" evidence="2">
        <dbReference type="Rhea" id="RHEA:67589"/>
    </physiologicalReaction>
</comment>
<comment type="cofactor">
    <cofactor evidence="3">
        <name>a divalent metal cation</name>
        <dbReference type="ChEBI" id="CHEBI:60240"/>
    </cofactor>
    <text evidence="3">Divalent metal ions.</text>
</comment>
<comment type="interaction">
    <interactant intactId="EBI-10096247">
        <id>P50583</id>
    </interactant>
    <interactant intactId="EBI-742054">
        <id>Q96D03</id>
        <label>DDIT4L</label>
    </interactant>
    <organismsDiffer>false</organismsDiffer>
    <experiments>3</experiments>
</comment>
<comment type="interaction">
    <interactant intactId="EBI-10096247">
        <id>P50583</id>
    </interactant>
    <interactant intactId="EBI-374900">
        <id>Q14566</id>
        <label>MCM6</label>
    </interactant>
    <organismsDiffer>false</organismsDiffer>
    <experiments>3</experiments>
</comment>
<comment type="interaction">
    <interactant intactId="EBI-10096247">
        <id>P50583</id>
    </interactant>
    <interactant intactId="EBI-742388">
        <id>Q9H8W4</id>
        <label>PLEKHF2</label>
    </interactant>
    <organismsDiffer>false</organismsDiffer>
    <experiments>3</experiments>
</comment>
<comment type="disease" evidence="5 6 7">
    <disease id="DI-06400">
        <name>Intellectual developmental disorder with or without peripheral neuropathy</name>
        <acronym>IDDPN</acronym>
        <description>An autosomal recessive disorder characterized by global developmental delay appearing in infancy or early childhood, intellectual disability, and progressive sensorimotor neuropathy with associated distal weakness. Affected individuals have hypotonia and delayed walking with an unsteady gait and frequent falls. Additional features may include dysarthria and subtle facial dysmorpism.</description>
        <dbReference type="MIM" id="619844"/>
    </disease>
    <text>The disease is caused by variants affecting the gene represented in this entry.</text>
</comment>
<comment type="similarity">
    <text evidence="9">Belongs to the Nudix hydrolase family.</text>
</comment>
<name>AP4A_HUMAN</name>
<evidence type="ECO:0000250" key="1">
    <source>
        <dbReference type="UniProtKB" id="P50584"/>
    </source>
</evidence>
<evidence type="ECO:0000250" key="2">
    <source>
        <dbReference type="UniProtKB" id="P56380"/>
    </source>
</evidence>
<evidence type="ECO:0000250" key="3">
    <source>
        <dbReference type="UniProtKB" id="Q9U2M7"/>
    </source>
</evidence>
<evidence type="ECO:0000255" key="4">
    <source>
        <dbReference type="PROSITE-ProRule" id="PRU00794"/>
    </source>
</evidence>
<evidence type="ECO:0000269" key="5">
    <source>
    </source>
</evidence>
<evidence type="ECO:0000269" key="6">
    <source>
    </source>
</evidence>
<evidence type="ECO:0000269" key="7">
    <source>
    </source>
</evidence>
<evidence type="ECO:0000269" key="8">
    <source ref="5"/>
</evidence>
<evidence type="ECO:0000305" key="9"/>
<evidence type="ECO:0007829" key="10">
    <source>
        <dbReference type="PDB" id="1XSA"/>
    </source>
</evidence>
<evidence type="ECO:0007829" key="11">
    <source>
        <dbReference type="PDB" id="4ICK"/>
    </source>
</evidence>
<dbReference type="EC" id="3.6.1.17" evidence="1"/>
<dbReference type="EMBL" id="U30313">
    <property type="protein sequence ID" value="AAC50277.1"/>
    <property type="molecule type" value="mRNA"/>
</dbReference>
<dbReference type="EMBL" id="AL356494">
    <property type="status" value="NOT_ANNOTATED_CDS"/>
    <property type="molecule type" value="Genomic_DNA"/>
</dbReference>
<dbReference type="EMBL" id="CH471071">
    <property type="protein sequence ID" value="EAW58461.1"/>
    <property type="molecule type" value="Genomic_DNA"/>
</dbReference>
<dbReference type="EMBL" id="CH471071">
    <property type="protein sequence ID" value="EAW58462.1"/>
    <property type="molecule type" value="Genomic_DNA"/>
</dbReference>
<dbReference type="EMBL" id="CH471071">
    <property type="protein sequence ID" value="EAW58463.1"/>
    <property type="molecule type" value="Genomic_DNA"/>
</dbReference>
<dbReference type="EMBL" id="BC004926">
    <property type="protein sequence ID" value="AAH04926.1"/>
    <property type="molecule type" value="mRNA"/>
</dbReference>
<dbReference type="CCDS" id="CCDS6552.1"/>
<dbReference type="PIR" id="S60111">
    <property type="entry name" value="S60111"/>
</dbReference>
<dbReference type="RefSeq" id="NP_001152.1">
    <property type="nucleotide sequence ID" value="NM_001161.5"/>
</dbReference>
<dbReference type="RefSeq" id="NP_001231319.1">
    <property type="nucleotide sequence ID" value="NM_001244390.2"/>
</dbReference>
<dbReference type="RefSeq" id="NP_671701.1">
    <property type="nucleotide sequence ID" value="NM_147172.3"/>
</dbReference>
<dbReference type="RefSeq" id="NP_671702.1">
    <property type="nucleotide sequence ID" value="NM_147173.3"/>
</dbReference>
<dbReference type="PDB" id="1XSA">
    <property type="method" value="NMR"/>
    <property type="chains" value="A=1-147"/>
</dbReference>
<dbReference type="PDB" id="1XSB">
    <property type="method" value="NMR"/>
    <property type="chains" value="A=1-147"/>
</dbReference>
<dbReference type="PDB" id="1XSC">
    <property type="method" value="NMR"/>
    <property type="chains" value="A=2-147"/>
</dbReference>
<dbReference type="PDB" id="3U53">
    <property type="method" value="X-ray"/>
    <property type="resolution" value="2.70 A"/>
    <property type="chains" value="A/B/C/D=1-147"/>
</dbReference>
<dbReference type="PDB" id="4ICK">
    <property type="method" value="X-ray"/>
    <property type="resolution" value="2.10 A"/>
    <property type="chains" value="A/B=1-147"/>
</dbReference>
<dbReference type="PDB" id="4IJX">
    <property type="method" value="X-ray"/>
    <property type="resolution" value="2.10 A"/>
    <property type="chains" value="A/B=1-147"/>
</dbReference>
<dbReference type="PDBsum" id="1XSA"/>
<dbReference type="PDBsum" id="1XSB"/>
<dbReference type="PDBsum" id="1XSC"/>
<dbReference type="PDBsum" id="3U53"/>
<dbReference type="PDBsum" id="4ICK"/>
<dbReference type="PDBsum" id="4IJX"/>
<dbReference type="BMRB" id="P50583"/>
<dbReference type="SMR" id="P50583"/>
<dbReference type="BioGRID" id="106815">
    <property type="interactions" value="12"/>
</dbReference>
<dbReference type="FunCoup" id="P50583">
    <property type="interactions" value="488"/>
</dbReference>
<dbReference type="IntAct" id="P50583">
    <property type="interactions" value="6"/>
</dbReference>
<dbReference type="STRING" id="9606.ENSP00000368452"/>
<dbReference type="BindingDB" id="P50583"/>
<dbReference type="ChEMBL" id="CHEMBL4105863"/>
<dbReference type="iPTMnet" id="P50583"/>
<dbReference type="PhosphoSitePlus" id="P50583"/>
<dbReference type="BioMuta" id="NUDT2"/>
<dbReference type="jPOST" id="P50583"/>
<dbReference type="MassIVE" id="P50583"/>
<dbReference type="PaxDb" id="9606-ENSP00000368455"/>
<dbReference type="PeptideAtlas" id="P50583"/>
<dbReference type="ProteomicsDB" id="56253"/>
<dbReference type="Pumba" id="P50583"/>
<dbReference type="TopDownProteomics" id="P50583"/>
<dbReference type="Antibodypedia" id="25392">
    <property type="antibodies" value="195 antibodies from 26 providers"/>
</dbReference>
<dbReference type="DNASU" id="318"/>
<dbReference type="Ensembl" id="ENST00000346365.9">
    <property type="protein sequence ID" value="ENSP00000344187.4"/>
    <property type="gene ID" value="ENSG00000164978.19"/>
</dbReference>
<dbReference type="Ensembl" id="ENST00000379155.9">
    <property type="protein sequence ID" value="ENSP00000368452.5"/>
    <property type="gene ID" value="ENSG00000164978.19"/>
</dbReference>
<dbReference type="Ensembl" id="ENST00000379158.7">
    <property type="protein sequence ID" value="ENSP00000368455.1"/>
    <property type="gene ID" value="ENSG00000164978.19"/>
</dbReference>
<dbReference type="Ensembl" id="ENST00000618590.1">
    <property type="protein sequence ID" value="ENSP00000482384.1"/>
    <property type="gene ID" value="ENSG00000164978.19"/>
</dbReference>
<dbReference type="GeneID" id="318"/>
<dbReference type="KEGG" id="hsa:318"/>
<dbReference type="MANE-Select" id="ENST00000379158.7">
    <property type="protein sequence ID" value="ENSP00000368455.1"/>
    <property type="RefSeq nucleotide sequence ID" value="NM_001161.5"/>
    <property type="RefSeq protein sequence ID" value="NP_001152.1"/>
</dbReference>
<dbReference type="UCSC" id="uc003zub.3">
    <property type="organism name" value="human"/>
</dbReference>
<dbReference type="AGR" id="HGNC:8049"/>
<dbReference type="CTD" id="318"/>
<dbReference type="DisGeNET" id="318"/>
<dbReference type="GeneCards" id="NUDT2"/>
<dbReference type="HGNC" id="HGNC:8049">
    <property type="gene designation" value="NUDT2"/>
</dbReference>
<dbReference type="HPA" id="ENSG00000164978">
    <property type="expression patterns" value="Low tissue specificity"/>
</dbReference>
<dbReference type="MalaCards" id="NUDT2"/>
<dbReference type="MIM" id="602852">
    <property type="type" value="gene"/>
</dbReference>
<dbReference type="MIM" id="619844">
    <property type="type" value="phenotype"/>
</dbReference>
<dbReference type="neXtProt" id="NX_P50583"/>
<dbReference type="OpenTargets" id="ENSG00000164978"/>
<dbReference type="PharmGKB" id="PA31833"/>
<dbReference type="VEuPathDB" id="HostDB:ENSG00000164978"/>
<dbReference type="eggNOG" id="KOG2839">
    <property type="taxonomic scope" value="Eukaryota"/>
</dbReference>
<dbReference type="GeneTree" id="ENSGT00390000002416"/>
<dbReference type="HOGENOM" id="CLU_037162_14_5_1"/>
<dbReference type="InParanoid" id="P50583"/>
<dbReference type="OMA" id="WRDYEQA"/>
<dbReference type="OrthoDB" id="276276at2759"/>
<dbReference type="PAN-GO" id="P50583">
    <property type="GO annotations" value="3 GO annotations based on evolutionary models"/>
</dbReference>
<dbReference type="PhylomeDB" id="P50583"/>
<dbReference type="TreeFam" id="TF105958"/>
<dbReference type="BRENDA" id="3.6.1.17">
    <property type="organism ID" value="2681"/>
</dbReference>
<dbReference type="PathwayCommons" id="P50583"/>
<dbReference type="Reactome" id="R-HSA-3299685">
    <property type="pathway name" value="Detoxification of Reactive Oxygen Species"/>
</dbReference>
<dbReference type="SABIO-RK" id="P50583"/>
<dbReference type="SignaLink" id="P50583"/>
<dbReference type="BioGRID-ORCS" id="318">
    <property type="hits" value="12 hits in 1157 CRISPR screens"/>
</dbReference>
<dbReference type="ChiTaRS" id="NUDT2">
    <property type="organism name" value="human"/>
</dbReference>
<dbReference type="EvolutionaryTrace" id="P50583"/>
<dbReference type="GeneWiki" id="NUDT2"/>
<dbReference type="GenomeRNAi" id="318"/>
<dbReference type="Pharos" id="P50583">
    <property type="development level" value="Tbio"/>
</dbReference>
<dbReference type="PRO" id="PR:P50583"/>
<dbReference type="Proteomes" id="UP000005640">
    <property type="component" value="Chromosome 9"/>
</dbReference>
<dbReference type="RNAct" id="P50583">
    <property type="molecule type" value="protein"/>
</dbReference>
<dbReference type="Bgee" id="ENSG00000164978">
    <property type="expression patterns" value="Expressed in stromal cell of endometrium and 180 other cell types or tissues"/>
</dbReference>
<dbReference type="GO" id="GO:0005759">
    <property type="term" value="C:mitochondrial matrix"/>
    <property type="evidence" value="ECO:0000304"/>
    <property type="project" value="Reactome"/>
</dbReference>
<dbReference type="GO" id="GO:0004081">
    <property type="term" value="F:bis(5'-nucleosyl)-tetraphosphatase (asymmetrical) activity"/>
    <property type="evidence" value="ECO:0000250"/>
    <property type="project" value="UniProtKB"/>
</dbReference>
<dbReference type="GO" id="GO:0008803">
    <property type="term" value="F:bis(5'-nucleosyl)-tetraphosphatase (symmetrical) activity"/>
    <property type="evidence" value="ECO:0000304"/>
    <property type="project" value="ProtInc"/>
</dbReference>
<dbReference type="GO" id="GO:0005525">
    <property type="term" value="F:GTP binding"/>
    <property type="evidence" value="ECO:0007669"/>
    <property type="project" value="UniProtKB-KW"/>
</dbReference>
<dbReference type="GO" id="GO:0006167">
    <property type="term" value="P:AMP biosynthetic process"/>
    <property type="evidence" value="ECO:0000318"/>
    <property type="project" value="GO_Central"/>
</dbReference>
<dbReference type="GO" id="GO:0006915">
    <property type="term" value="P:apoptotic process"/>
    <property type="evidence" value="ECO:0000250"/>
    <property type="project" value="UniProtKB"/>
</dbReference>
<dbReference type="GO" id="GO:0006754">
    <property type="term" value="P:ATP biosynthetic process"/>
    <property type="evidence" value="ECO:0000318"/>
    <property type="project" value="GO_Central"/>
</dbReference>
<dbReference type="GO" id="GO:0034599">
    <property type="term" value="P:cellular response to oxidative stress"/>
    <property type="evidence" value="ECO:0000304"/>
    <property type="project" value="Reactome"/>
</dbReference>
<dbReference type="GO" id="GO:0006139">
    <property type="term" value="P:nucleobase-containing compound metabolic process"/>
    <property type="evidence" value="ECO:0000304"/>
    <property type="project" value="ProtInc"/>
</dbReference>
<dbReference type="CDD" id="cd03428">
    <property type="entry name" value="NUDIX_Ap4A_Nudt2"/>
    <property type="match status" value="1"/>
</dbReference>
<dbReference type="FunFam" id="3.90.79.10:FF:000037">
    <property type="entry name" value="Nudix hydrolase 2"/>
    <property type="match status" value="1"/>
</dbReference>
<dbReference type="Gene3D" id="3.90.79.10">
    <property type="entry name" value="Nucleoside Triphosphate Pyrophosphohydrolase"/>
    <property type="match status" value="1"/>
</dbReference>
<dbReference type="InterPro" id="IPR015797">
    <property type="entry name" value="NUDIX_hydrolase-like_dom_sf"/>
</dbReference>
<dbReference type="InterPro" id="IPR020084">
    <property type="entry name" value="NUDIX_hydrolase_CS"/>
</dbReference>
<dbReference type="InterPro" id="IPR000086">
    <property type="entry name" value="NUDIX_hydrolase_dom"/>
</dbReference>
<dbReference type="InterPro" id="IPR051325">
    <property type="entry name" value="Nudix_hydrolase_domain"/>
</dbReference>
<dbReference type="InterPro" id="IPR003565">
    <property type="entry name" value="Tetra_PHTase"/>
</dbReference>
<dbReference type="PANTHER" id="PTHR21340:SF0">
    <property type="entry name" value="BIS(5'-NUCLEOSYL)-TETRAPHOSPHATASE [ASYMMETRICAL]"/>
    <property type="match status" value="1"/>
</dbReference>
<dbReference type="PANTHER" id="PTHR21340">
    <property type="entry name" value="DIADENOSINE 5,5-P1,P4-TETRAPHOSPHATE PYROPHOSPHOHYDROLASE MUTT"/>
    <property type="match status" value="1"/>
</dbReference>
<dbReference type="Pfam" id="PF00293">
    <property type="entry name" value="NUDIX"/>
    <property type="match status" value="1"/>
</dbReference>
<dbReference type="PRINTS" id="PR01405">
    <property type="entry name" value="TETRPHPHTASE"/>
</dbReference>
<dbReference type="SUPFAM" id="SSF55811">
    <property type="entry name" value="Nudix"/>
    <property type="match status" value="1"/>
</dbReference>
<dbReference type="PROSITE" id="PS51462">
    <property type="entry name" value="NUDIX"/>
    <property type="match status" value="1"/>
</dbReference>
<dbReference type="PROSITE" id="PS00893">
    <property type="entry name" value="NUDIX_BOX"/>
    <property type="match status" value="1"/>
</dbReference>
<protein>
    <recommendedName>
        <fullName>Bis(5'-nucleosyl)-tetraphosphatase [asymmetrical]</fullName>
        <ecNumber evidence="1">3.6.1.17</ecNumber>
    </recommendedName>
    <alternativeName>
        <fullName>Diadenosine 5',5'''-P1,P4-tetraphosphate asymmetrical hydrolase</fullName>
        <shortName>Ap4A hydrolase</shortName>
        <shortName>Ap4Aase</shortName>
        <shortName>Diadenosine tetraphosphatase</shortName>
    </alternativeName>
    <alternativeName>
        <fullName>Nucleoside diphosphate-linked moiety X motif 2</fullName>
        <shortName>Nudix motif 2</shortName>
    </alternativeName>
</protein>
<accession>P50583</accession>
<accession>D3DRM0</accession>
<accession>Q5T589</accession>
<feature type="initiator methionine" description="Removed" evidence="8">
    <location>
        <position position="1"/>
    </location>
</feature>
<feature type="chain" id="PRO_0000057102" description="Bis(5'-nucleosyl)-tetraphosphatase [asymmetrical]">
    <location>
        <begin position="2"/>
        <end position="147"/>
    </location>
</feature>
<feature type="domain" description="Nudix hydrolase" evidence="4">
    <location>
        <begin position="1"/>
        <end position="139"/>
    </location>
</feature>
<feature type="short sequence motif" description="Nudix box">
    <location>
        <begin position="43"/>
        <end position="64"/>
    </location>
</feature>
<feature type="modified residue" description="N-acetylalanine" evidence="8">
    <location>
        <position position="2"/>
    </location>
</feature>
<feature type="sequence variant" id="VAR_087119" description="In IDDPN; dbSNP:rs148119952." evidence="5">
    <location>
        <begin position="12"/>
        <end position="147"/>
    </location>
</feature>
<feature type="strand" evidence="11">
    <location>
        <begin position="5"/>
        <end position="13"/>
    </location>
</feature>
<feature type="turn" evidence="11">
    <location>
        <begin position="17"/>
        <end position="19"/>
    </location>
</feature>
<feature type="strand" evidence="11">
    <location>
        <begin position="23"/>
        <end position="33"/>
    </location>
</feature>
<feature type="strand" evidence="11">
    <location>
        <begin position="42"/>
        <end position="44"/>
    </location>
</feature>
<feature type="strand" evidence="10">
    <location>
        <begin position="47"/>
        <end position="49"/>
    </location>
</feature>
<feature type="helix" evidence="11">
    <location>
        <begin position="51"/>
        <end position="63"/>
    </location>
</feature>
<feature type="helix" evidence="11">
    <location>
        <begin position="67"/>
        <end position="69"/>
    </location>
</feature>
<feature type="strand" evidence="11">
    <location>
        <begin position="70"/>
        <end position="84"/>
    </location>
</feature>
<feature type="strand" evidence="11">
    <location>
        <begin position="87"/>
        <end position="99"/>
    </location>
</feature>
<feature type="strand" evidence="11">
    <location>
        <begin position="111"/>
        <end position="117"/>
    </location>
</feature>
<feature type="helix" evidence="11">
    <location>
        <begin position="119"/>
        <end position="126"/>
    </location>
</feature>
<feature type="helix" evidence="11">
    <location>
        <begin position="129"/>
        <end position="147"/>
    </location>
</feature>
<reference key="1">
    <citation type="journal article" date="1995" name="Biochem. J.">
        <title>Human diadenosine 5',5''-P1,P4-tetraphosphate pyrophosphohydrolase is a member of the MutT family of nucleotide pyrophosphatases.</title>
        <authorList>
            <person name="Thorne N.M.H."/>
            <person name="Hankin S."/>
            <person name="Wilkinson M.C."/>
            <person name="Nunez C."/>
            <person name="Barraclough R."/>
            <person name="McLennan A.G."/>
        </authorList>
    </citation>
    <scope>NUCLEOTIDE SEQUENCE [MRNA]</scope>
    <source>
        <tissue>Liver</tissue>
        <tissue>Spleen</tissue>
    </source>
</reference>
<reference key="2">
    <citation type="journal article" date="2004" name="Nature">
        <title>DNA sequence and analysis of human chromosome 9.</title>
        <authorList>
            <person name="Humphray S.J."/>
            <person name="Oliver K."/>
            <person name="Hunt A.R."/>
            <person name="Plumb R.W."/>
            <person name="Loveland J.E."/>
            <person name="Howe K.L."/>
            <person name="Andrews T.D."/>
            <person name="Searle S."/>
            <person name="Hunt S.E."/>
            <person name="Scott C.E."/>
            <person name="Jones M.C."/>
            <person name="Ainscough R."/>
            <person name="Almeida J.P."/>
            <person name="Ambrose K.D."/>
            <person name="Ashwell R.I.S."/>
            <person name="Babbage A.K."/>
            <person name="Babbage S."/>
            <person name="Bagguley C.L."/>
            <person name="Bailey J."/>
            <person name="Banerjee R."/>
            <person name="Barker D.J."/>
            <person name="Barlow K.F."/>
            <person name="Bates K."/>
            <person name="Beasley H."/>
            <person name="Beasley O."/>
            <person name="Bird C.P."/>
            <person name="Bray-Allen S."/>
            <person name="Brown A.J."/>
            <person name="Brown J.Y."/>
            <person name="Burford D."/>
            <person name="Burrill W."/>
            <person name="Burton J."/>
            <person name="Carder C."/>
            <person name="Carter N.P."/>
            <person name="Chapman J.C."/>
            <person name="Chen Y."/>
            <person name="Clarke G."/>
            <person name="Clark S.Y."/>
            <person name="Clee C.M."/>
            <person name="Clegg S."/>
            <person name="Collier R.E."/>
            <person name="Corby N."/>
            <person name="Crosier M."/>
            <person name="Cummings A.T."/>
            <person name="Davies J."/>
            <person name="Dhami P."/>
            <person name="Dunn M."/>
            <person name="Dutta I."/>
            <person name="Dyer L.W."/>
            <person name="Earthrowl M.E."/>
            <person name="Faulkner L."/>
            <person name="Fleming C.J."/>
            <person name="Frankish A."/>
            <person name="Frankland J.A."/>
            <person name="French L."/>
            <person name="Fricker D.G."/>
            <person name="Garner P."/>
            <person name="Garnett J."/>
            <person name="Ghori J."/>
            <person name="Gilbert J.G.R."/>
            <person name="Glison C."/>
            <person name="Grafham D.V."/>
            <person name="Gribble S."/>
            <person name="Griffiths C."/>
            <person name="Griffiths-Jones S."/>
            <person name="Grocock R."/>
            <person name="Guy J."/>
            <person name="Hall R.E."/>
            <person name="Hammond S."/>
            <person name="Harley J.L."/>
            <person name="Harrison E.S.I."/>
            <person name="Hart E.A."/>
            <person name="Heath P.D."/>
            <person name="Henderson C.D."/>
            <person name="Hopkins B.L."/>
            <person name="Howard P.J."/>
            <person name="Howden P.J."/>
            <person name="Huckle E."/>
            <person name="Johnson C."/>
            <person name="Johnson D."/>
            <person name="Joy A.A."/>
            <person name="Kay M."/>
            <person name="Keenan S."/>
            <person name="Kershaw J.K."/>
            <person name="Kimberley A.M."/>
            <person name="King A."/>
            <person name="Knights A."/>
            <person name="Laird G.K."/>
            <person name="Langford C."/>
            <person name="Lawlor S."/>
            <person name="Leongamornlert D.A."/>
            <person name="Leversha M."/>
            <person name="Lloyd C."/>
            <person name="Lloyd D.M."/>
            <person name="Lovell J."/>
            <person name="Martin S."/>
            <person name="Mashreghi-Mohammadi M."/>
            <person name="Matthews L."/>
            <person name="McLaren S."/>
            <person name="McLay K.E."/>
            <person name="McMurray A."/>
            <person name="Milne S."/>
            <person name="Nickerson T."/>
            <person name="Nisbett J."/>
            <person name="Nordsiek G."/>
            <person name="Pearce A.V."/>
            <person name="Peck A.I."/>
            <person name="Porter K.M."/>
            <person name="Pandian R."/>
            <person name="Pelan S."/>
            <person name="Phillimore B."/>
            <person name="Povey S."/>
            <person name="Ramsey Y."/>
            <person name="Rand V."/>
            <person name="Scharfe M."/>
            <person name="Sehra H.K."/>
            <person name="Shownkeen R."/>
            <person name="Sims S.K."/>
            <person name="Skuce C.D."/>
            <person name="Smith M."/>
            <person name="Steward C.A."/>
            <person name="Swarbreck D."/>
            <person name="Sycamore N."/>
            <person name="Tester J."/>
            <person name="Thorpe A."/>
            <person name="Tracey A."/>
            <person name="Tromans A."/>
            <person name="Thomas D.W."/>
            <person name="Wall M."/>
            <person name="Wallis J.M."/>
            <person name="West A.P."/>
            <person name="Whitehead S.L."/>
            <person name="Willey D.L."/>
            <person name="Williams S.A."/>
            <person name="Wilming L."/>
            <person name="Wray P.W."/>
            <person name="Young L."/>
            <person name="Ashurst J.L."/>
            <person name="Coulson A."/>
            <person name="Blocker H."/>
            <person name="Durbin R.M."/>
            <person name="Sulston J.E."/>
            <person name="Hubbard T."/>
            <person name="Jackson M.J."/>
            <person name="Bentley D.R."/>
            <person name="Beck S."/>
            <person name="Rogers J."/>
            <person name="Dunham I."/>
        </authorList>
    </citation>
    <scope>NUCLEOTIDE SEQUENCE [LARGE SCALE GENOMIC DNA]</scope>
</reference>
<reference key="3">
    <citation type="submission" date="2005-09" db="EMBL/GenBank/DDBJ databases">
        <authorList>
            <person name="Mural R.J."/>
            <person name="Istrail S."/>
            <person name="Sutton G.G."/>
            <person name="Florea L."/>
            <person name="Halpern A.L."/>
            <person name="Mobarry C.M."/>
            <person name="Lippert R."/>
            <person name="Walenz B."/>
            <person name="Shatkay H."/>
            <person name="Dew I."/>
            <person name="Miller J.R."/>
            <person name="Flanigan M.J."/>
            <person name="Edwards N.J."/>
            <person name="Bolanos R."/>
            <person name="Fasulo D."/>
            <person name="Halldorsson B.V."/>
            <person name="Hannenhalli S."/>
            <person name="Turner R."/>
            <person name="Yooseph S."/>
            <person name="Lu F."/>
            <person name="Nusskern D.R."/>
            <person name="Shue B.C."/>
            <person name="Zheng X.H."/>
            <person name="Zhong F."/>
            <person name="Delcher A.L."/>
            <person name="Huson D.H."/>
            <person name="Kravitz S.A."/>
            <person name="Mouchard L."/>
            <person name="Reinert K."/>
            <person name="Remington K.A."/>
            <person name="Clark A.G."/>
            <person name="Waterman M.S."/>
            <person name="Eichler E.E."/>
            <person name="Adams M.D."/>
            <person name="Hunkapiller M.W."/>
            <person name="Myers E.W."/>
            <person name="Venter J.C."/>
        </authorList>
    </citation>
    <scope>NUCLEOTIDE SEQUENCE [LARGE SCALE GENOMIC DNA]</scope>
</reference>
<reference key="4">
    <citation type="journal article" date="2004" name="Genome Res.">
        <title>The status, quality, and expansion of the NIH full-length cDNA project: the Mammalian Gene Collection (MGC).</title>
        <authorList>
            <consortium name="The MGC Project Team"/>
        </authorList>
    </citation>
    <scope>NUCLEOTIDE SEQUENCE [LARGE SCALE MRNA]</scope>
    <source>
        <tissue>Pancreas</tissue>
    </source>
</reference>
<reference key="5">
    <citation type="submission" date="1997-01" db="UniProtKB">
        <authorList>
            <person name="McLennan A.G."/>
        </authorList>
    </citation>
    <scope>ACETYLATION AT ALA-2</scope>
</reference>
<reference key="6">
    <citation type="journal article" date="2011" name="BMC Syst. Biol.">
        <title>Initial characterization of the human central proteome.</title>
        <authorList>
            <person name="Burkard T.R."/>
            <person name="Planyavsky M."/>
            <person name="Kaupe I."/>
            <person name="Breitwieser F.P."/>
            <person name="Buerckstuemmer T."/>
            <person name="Bennett K.L."/>
            <person name="Superti-Furga G."/>
            <person name="Colinge J."/>
        </authorList>
    </citation>
    <scope>IDENTIFICATION BY MASS SPECTROMETRY [LARGE SCALE ANALYSIS]</scope>
</reference>
<reference key="7">
    <citation type="journal article" date="2005" name="J. Biol. Chem.">
        <title>Structure and substrate-binding mechanism of human Ap4A hydrolase.</title>
        <authorList>
            <person name="Swarbrick J.D."/>
            <person name="Buyya S."/>
            <person name="Gunawardana D."/>
            <person name="Gayler K.R."/>
            <person name="McLennan A.G."/>
            <person name="Gooley P.R."/>
        </authorList>
    </citation>
    <scope>STRUCTURE BY NMR</scope>
</reference>
<reference key="8">
    <citation type="journal article" date="2017" name="Mol. Psychiatry">
        <title>Clinical genomics expands the morbid genome of intellectual disability and offers a high diagnostic yield.</title>
        <authorList>
            <person name="Anazi S."/>
            <person name="Maddirevula S."/>
            <person name="Faqeih E."/>
            <person name="Alsedairy H."/>
            <person name="Alzahrani F."/>
            <person name="Shamseldin H.E."/>
            <person name="Patel N."/>
            <person name="Hashem M."/>
            <person name="Ibrahim N."/>
            <person name="Abdulwahab F."/>
            <person name="Ewida N."/>
            <person name="Alsaif H.S."/>
            <person name="Al Sharif H."/>
            <person name="Alamoudi W."/>
            <person name="Kentab A."/>
            <person name="Bashiri F.A."/>
            <person name="Alnaser M."/>
            <person name="AlWadei A.H."/>
            <person name="Alfadhel M."/>
            <person name="Eyaid W."/>
            <person name="Hashem A."/>
            <person name="Al Asmari A."/>
            <person name="Saleh M.M."/>
            <person name="AlSaman A."/>
            <person name="Alhasan K.A."/>
            <person name="Alsughayir M."/>
            <person name="Al Shammari M."/>
            <person name="Mahmoud A."/>
            <person name="Al-Hassnan Z.N."/>
            <person name="Al-Husain M."/>
            <person name="Osama Khalil R."/>
            <person name="Abd El Meguid N."/>
            <person name="Masri A."/>
            <person name="Ali R."/>
            <person name="Ben-Omran T."/>
            <person name="El Fishway P."/>
            <person name="Hashish A."/>
            <person name="Ercan Sencicek A."/>
            <person name="State M."/>
            <person name="Alazami A.M."/>
            <person name="Salih M.A."/>
            <person name="Altassan N."/>
            <person name="Arold S.T."/>
            <person name="Abouelhoda M."/>
            <person name="Wakil S.M."/>
            <person name="Monies D."/>
            <person name="Shaheen R."/>
            <person name="Alkuraya F.S."/>
        </authorList>
    </citation>
    <scope>INVOLVEMENT IN IDDPN</scope>
    <scope>VARIANT IDDPN 12-ARG--ALA-147 DEL</scope>
</reference>
<reference key="9">
    <citation type="journal article" date="2018" name="Clin. Genet.">
        <title>A founder nonsense variant in NUDT2 causes a recessive neurodevelopmental disorder in Saudi Arab children.</title>
        <authorList>
            <person name="Yavuz H."/>
            <person name="Bertoli-Avella A.M."/>
            <person name="Alfadhel M."/>
            <person name="Al-Sannaa N."/>
            <person name="Kandaswamy K.K."/>
            <person name="Al-Tuwaijri W."/>
            <person name="Rolfs A."/>
            <person name="Brandau O."/>
            <person name="Bauer P."/>
        </authorList>
    </citation>
    <scope>INVOLVEMENT IN IDDPN</scope>
    <scope>VARIANT IDDPN 12-ARG--ALA-147 DEL</scope>
</reference>
<reference key="10">
    <citation type="journal article" date="2020" name="Ann. Clin. Transl. Neurol.">
        <title>Novel NUDT2 variant causes intellectual disability and polyneuropathy.</title>
        <authorList>
            <person name="Diaz F."/>
            <person name="Khosa S."/>
            <person name="Niyazov D."/>
            <person name="Lee H."/>
            <person name="Person R."/>
            <person name="Morrow M.M."/>
            <person name="Signer R."/>
            <person name="Dorrani N."/>
            <person name="Zheng A."/>
            <person name="Herzog M."/>
            <person name="Freundlich R."/>
            <person name="Birath J.B."/>
            <person name="Cervantes-Manzo Y."/>
            <person name="Martinez-Agosto J.A."/>
            <person name="Palmer C."/>
            <person name="Nelson S.F."/>
            <person name="Fogel B.L."/>
            <person name="Mishra S.K."/>
        </authorList>
    </citation>
    <scope>INVOLVEMENT IN IDDPN</scope>
</reference>
<proteinExistence type="evidence at protein level"/>
<sequence length="147" mass="16829">MALRACGLIIFRRCLIPKVDNNAIEFLLLQASDGIHHWTPPKGHVEPGEDDLETALRETQEEAGIEAGQLTIIEGFKRELNYVARNKPKTVIYWLAEVKDYDVEIRLSHEHQAYRWLGLEEACQLAQFKEMKAALQEGHQFLCSIEA</sequence>